<evidence type="ECO:0000255" key="1">
    <source>
        <dbReference type="HAMAP-Rule" id="MF_00379"/>
    </source>
</evidence>
<keyword id="KW-0963">Cytoplasm</keyword>
<keyword id="KW-0342">GTP-binding</keyword>
<keyword id="KW-0378">Hydrolase</keyword>
<keyword id="KW-0460">Magnesium</keyword>
<keyword id="KW-0479">Metal-binding</keyword>
<keyword id="KW-0547">Nucleotide-binding</keyword>
<keyword id="KW-0630">Potassium</keyword>
<keyword id="KW-1185">Reference proteome</keyword>
<keyword id="KW-0819">tRNA processing</keyword>
<reference key="1">
    <citation type="journal article" date="2010" name="J. Bacteriol.">
        <title>Genome sequence of the dioxin-mineralizing bacterium Sphingomonas wittichii RW1.</title>
        <authorList>
            <person name="Miller T.R."/>
            <person name="Delcher A.L."/>
            <person name="Salzberg S.L."/>
            <person name="Saunders E."/>
            <person name="Detter J.C."/>
            <person name="Halden R.U."/>
        </authorList>
    </citation>
    <scope>NUCLEOTIDE SEQUENCE [LARGE SCALE GENOMIC DNA]</scope>
    <source>
        <strain>DSM 6014 / CCUG 31198 / JCM 15750 / NBRC 105917 / EY 4224 / RW1</strain>
    </source>
</reference>
<accession>A5VA82</accession>
<sequence>MPPAPLENSPGASASDTIFALSSGAPPAGVAVVRISGPMAGVAIDRLTGSRPRPAARRASLRALTNPDGGALLDRALLLWLPGPGTATGEDMAELHLHGGRAVTAAVLAALGRLPGLRPATAGEFTRRAFETGRIDLNEAEALADLLAAETEAQRRNAMLLAGGALSRALEDWQHRVLSLAARLEAQLDFSDEEDVAPLDPGFAAELAALDAEVVRWRGRLPVERLRDGVRVVLAGPPNAGKSTLLNALAGREAAIVTPIAGTTRDLIEAPVALGGIPFLLTDTAGLHEGTGDAVEAIGIDRAGQAIAAADIVLWLGDPGCAPAGSVRIGAQADRRTHDSAAHDLLVSARSGTGMDDLVALLLDRAAGLLPGEGEAALSARQRAALDRLGEALALAREEGDPILVAEGLRLARAAIDALTGRAGTEDMLDGLFGRFCIGK</sequence>
<feature type="chain" id="PRO_0000345909" description="tRNA modification GTPase MnmE">
    <location>
        <begin position="1"/>
        <end position="440"/>
    </location>
</feature>
<feature type="domain" description="TrmE-type G">
    <location>
        <begin position="229"/>
        <end position="367"/>
    </location>
</feature>
<feature type="binding site" evidence="1">
    <location>
        <position position="34"/>
    </location>
    <ligand>
        <name>(6S)-5-formyl-5,6,7,8-tetrahydrofolate</name>
        <dbReference type="ChEBI" id="CHEBI:57457"/>
    </ligand>
</feature>
<feature type="binding site" evidence="1">
    <location>
        <position position="94"/>
    </location>
    <ligand>
        <name>(6S)-5-formyl-5,6,7,8-tetrahydrofolate</name>
        <dbReference type="ChEBI" id="CHEBI:57457"/>
    </ligand>
</feature>
<feature type="binding site" evidence="1">
    <location>
        <position position="134"/>
    </location>
    <ligand>
        <name>(6S)-5-formyl-5,6,7,8-tetrahydrofolate</name>
        <dbReference type="ChEBI" id="CHEBI:57457"/>
    </ligand>
</feature>
<feature type="binding site" evidence="1">
    <location>
        <begin position="239"/>
        <end position="244"/>
    </location>
    <ligand>
        <name>GTP</name>
        <dbReference type="ChEBI" id="CHEBI:37565"/>
    </ligand>
</feature>
<feature type="binding site" evidence="1">
    <location>
        <position position="239"/>
    </location>
    <ligand>
        <name>K(+)</name>
        <dbReference type="ChEBI" id="CHEBI:29103"/>
    </ligand>
</feature>
<feature type="binding site" evidence="1">
    <location>
        <position position="243"/>
    </location>
    <ligand>
        <name>Mg(2+)</name>
        <dbReference type="ChEBI" id="CHEBI:18420"/>
    </ligand>
</feature>
<feature type="binding site" evidence="1">
    <location>
        <begin position="258"/>
        <end position="264"/>
    </location>
    <ligand>
        <name>GTP</name>
        <dbReference type="ChEBI" id="CHEBI:37565"/>
    </ligand>
</feature>
<feature type="binding site" evidence="1">
    <location>
        <position position="258"/>
    </location>
    <ligand>
        <name>K(+)</name>
        <dbReference type="ChEBI" id="CHEBI:29103"/>
    </ligand>
</feature>
<feature type="binding site" evidence="1">
    <location>
        <position position="260"/>
    </location>
    <ligand>
        <name>K(+)</name>
        <dbReference type="ChEBI" id="CHEBI:29103"/>
    </ligand>
</feature>
<feature type="binding site" evidence="1">
    <location>
        <position position="263"/>
    </location>
    <ligand>
        <name>K(+)</name>
        <dbReference type="ChEBI" id="CHEBI:29103"/>
    </ligand>
</feature>
<feature type="binding site" evidence="1">
    <location>
        <position position="264"/>
    </location>
    <ligand>
        <name>Mg(2+)</name>
        <dbReference type="ChEBI" id="CHEBI:18420"/>
    </ligand>
</feature>
<feature type="binding site" evidence="1">
    <location>
        <begin position="283"/>
        <end position="286"/>
    </location>
    <ligand>
        <name>GTP</name>
        <dbReference type="ChEBI" id="CHEBI:37565"/>
    </ligand>
</feature>
<feature type="binding site" evidence="1">
    <location>
        <begin position="348"/>
        <end position="350"/>
    </location>
    <ligand>
        <name>GTP</name>
        <dbReference type="ChEBI" id="CHEBI:37565"/>
    </ligand>
</feature>
<feature type="binding site" evidence="1">
    <location>
        <position position="440"/>
    </location>
    <ligand>
        <name>(6S)-5-formyl-5,6,7,8-tetrahydrofolate</name>
        <dbReference type="ChEBI" id="CHEBI:57457"/>
    </ligand>
</feature>
<dbReference type="EC" id="3.6.-.-" evidence="1"/>
<dbReference type="EMBL" id="CP000699">
    <property type="protein sequence ID" value="ABQ69198.1"/>
    <property type="molecule type" value="Genomic_DNA"/>
</dbReference>
<dbReference type="SMR" id="A5VA82"/>
<dbReference type="STRING" id="392499.Swit_2845"/>
<dbReference type="PaxDb" id="392499-Swit_2845"/>
<dbReference type="KEGG" id="swi:Swit_2845"/>
<dbReference type="eggNOG" id="COG0486">
    <property type="taxonomic scope" value="Bacteria"/>
</dbReference>
<dbReference type="HOGENOM" id="CLU_019624_3_1_5"/>
<dbReference type="OrthoDB" id="9805918at2"/>
<dbReference type="Proteomes" id="UP000001989">
    <property type="component" value="Chromosome"/>
</dbReference>
<dbReference type="GO" id="GO:0005737">
    <property type="term" value="C:cytoplasm"/>
    <property type="evidence" value="ECO:0007669"/>
    <property type="project" value="UniProtKB-SubCell"/>
</dbReference>
<dbReference type="GO" id="GO:0005525">
    <property type="term" value="F:GTP binding"/>
    <property type="evidence" value="ECO:0007669"/>
    <property type="project" value="UniProtKB-UniRule"/>
</dbReference>
<dbReference type="GO" id="GO:0003924">
    <property type="term" value="F:GTPase activity"/>
    <property type="evidence" value="ECO:0007669"/>
    <property type="project" value="UniProtKB-UniRule"/>
</dbReference>
<dbReference type="GO" id="GO:0046872">
    <property type="term" value="F:metal ion binding"/>
    <property type="evidence" value="ECO:0007669"/>
    <property type="project" value="UniProtKB-KW"/>
</dbReference>
<dbReference type="GO" id="GO:0030488">
    <property type="term" value="P:tRNA methylation"/>
    <property type="evidence" value="ECO:0007669"/>
    <property type="project" value="TreeGrafter"/>
</dbReference>
<dbReference type="GO" id="GO:0002098">
    <property type="term" value="P:tRNA wobble uridine modification"/>
    <property type="evidence" value="ECO:0007669"/>
    <property type="project" value="TreeGrafter"/>
</dbReference>
<dbReference type="CDD" id="cd04164">
    <property type="entry name" value="trmE"/>
    <property type="match status" value="1"/>
</dbReference>
<dbReference type="CDD" id="cd14858">
    <property type="entry name" value="TrmE_N"/>
    <property type="match status" value="1"/>
</dbReference>
<dbReference type="FunFam" id="3.30.1360.120:FF:000007">
    <property type="entry name" value="tRNA modification GTPase GTPBP3, mitochondrial"/>
    <property type="match status" value="1"/>
</dbReference>
<dbReference type="Gene3D" id="3.40.50.300">
    <property type="entry name" value="P-loop containing nucleotide triphosphate hydrolases"/>
    <property type="match status" value="1"/>
</dbReference>
<dbReference type="Gene3D" id="3.30.1360.120">
    <property type="entry name" value="Probable tRNA modification gtpase trme, domain 1"/>
    <property type="match status" value="1"/>
</dbReference>
<dbReference type="Gene3D" id="1.20.120.430">
    <property type="entry name" value="tRNA modification GTPase MnmE domain 2"/>
    <property type="match status" value="1"/>
</dbReference>
<dbReference type="HAMAP" id="MF_00379">
    <property type="entry name" value="GTPase_MnmE"/>
    <property type="match status" value="1"/>
</dbReference>
<dbReference type="InterPro" id="IPR031168">
    <property type="entry name" value="G_TrmE"/>
</dbReference>
<dbReference type="InterPro" id="IPR006073">
    <property type="entry name" value="GTP-bd"/>
</dbReference>
<dbReference type="InterPro" id="IPR018948">
    <property type="entry name" value="GTP-bd_TrmE_N"/>
</dbReference>
<dbReference type="InterPro" id="IPR004520">
    <property type="entry name" value="GTPase_MnmE"/>
</dbReference>
<dbReference type="InterPro" id="IPR027368">
    <property type="entry name" value="MnmE_dom2"/>
</dbReference>
<dbReference type="InterPro" id="IPR025867">
    <property type="entry name" value="MnmE_helical"/>
</dbReference>
<dbReference type="InterPro" id="IPR027417">
    <property type="entry name" value="P-loop_NTPase"/>
</dbReference>
<dbReference type="InterPro" id="IPR005225">
    <property type="entry name" value="Small_GTP-bd"/>
</dbReference>
<dbReference type="InterPro" id="IPR027266">
    <property type="entry name" value="TrmE/GcvT_dom1"/>
</dbReference>
<dbReference type="NCBIfam" id="NF003661">
    <property type="entry name" value="PRK05291.1-3"/>
    <property type="match status" value="1"/>
</dbReference>
<dbReference type="NCBIfam" id="TIGR00231">
    <property type="entry name" value="small_GTP"/>
    <property type="match status" value="1"/>
</dbReference>
<dbReference type="PANTHER" id="PTHR42714">
    <property type="entry name" value="TRNA MODIFICATION GTPASE GTPBP3"/>
    <property type="match status" value="1"/>
</dbReference>
<dbReference type="PANTHER" id="PTHR42714:SF2">
    <property type="entry name" value="TRNA MODIFICATION GTPASE GTPBP3, MITOCHONDRIAL"/>
    <property type="match status" value="1"/>
</dbReference>
<dbReference type="Pfam" id="PF01926">
    <property type="entry name" value="MMR_HSR1"/>
    <property type="match status" value="1"/>
</dbReference>
<dbReference type="Pfam" id="PF12631">
    <property type="entry name" value="MnmE_helical"/>
    <property type="match status" value="1"/>
</dbReference>
<dbReference type="Pfam" id="PF10396">
    <property type="entry name" value="TrmE_N"/>
    <property type="match status" value="1"/>
</dbReference>
<dbReference type="PRINTS" id="PR00326">
    <property type="entry name" value="GTP1OBG"/>
</dbReference>
<dbReference type="SUPFAM" id="SSF103025">
    <property type="entry name" value="Folate-binding domain"/>
    <property type="match status" value="1"/>
</dbReference>
<dbReference type="SUPFAM" id="SSF52540">
    <property type="entry name" value="P-loop containing nucleoside triphosphate hydrolases"/>
    <property type="match status" value="1"/>
</dbReference>
<dbReference type="SUPFAM" id="SSF116878">
    <property type="entry name" value="TrmE connector domain"/>
    <property type="match status" value="1"/>
</dbReference>
<dbReference type="PROSITE" id="PS51709">
    <property type="entry name" value="G_TRME"/>
    <property type="match status" value="1"/>
</dbReference>
<protein>
    <recommendedName>
        <fullName evidence="1">tRNA modification GTPase MnmE</fullName>
        <ecNumber evidence="1">3.6.-.-</ecNumber>
    </recommendedName>
</protein>
<gene>
    <name evidence="1" type="primary">mnmE</name>
    <name evidence="1" type="synonym">trmE</name>
    <name type="ordered locus">Swit_2845</name>
</gene>
<proteinExistence type="inferred from homology"/>
<organism>
    <name type="scientific">Rhizorhabdus wittichii (strain DSM 6014 / CCUG 31198 / JCM 15750 / NBRC 105917 / EY 4224 / RW1)</name>
    <name type="common">Sphingomonas wittichii</name>
    <dbReference type="NCBI Taxonomy" id="392499"/>
    <lineage>
        <taxon>Bacteria</taxon>
        <taxon>Pseudomonadati</taxon>
        <taxon>Pseudomonadota</taxon>
        <taxon>Alphaproteobacteria</taxon>
        <taxon>Sphingomonadales</taxon>
        <taxon>Sphingomonadaceae</taxon>
        <taxon>Rhizorhabdus</taxon>
    </lineage>
</organism>
<comment type="function">
    <text evidence="1">Exhibits a very high intrinsic GTPase hydrolysis rate. Involved in the addition of a carboxymethylaminomethyl (cmnm) group at the wobble position (U34) of certain tRNAs, forming tRNA-cmnm(5)s(2)U34.</text>
</comment>
<comment type="cofactor">
    <cofactor evidence="1">
        <name>K(+)</name>
        <dbReference type="ChEBI" id="CHEBI:29103"/>
    </cofactor>
    <text evidence="1">Binds 1 potassium ion per subunit.</text>
</comment>
<comment type="subunit">
    <text evidence="1">Homodimer. Heterotetramer of two MnmE and two MnmG subunits.</text>
</comment>
<comment type="subcellular location">
    <subcellularLocation>
        <location evidence="1">Cytoplasm</location>
    </subcellularLocation>
</comment>
<comment type="similarity">
    <text evidence="1">Belongs to the TRAFAC class TrmE-Era-EngA-EngB-Septin-like GTPase superfamily. TrmE GTPase family.</text>
</comment>
<name>MNME_RHIWR</name>